<organism>
    <name type="scientific">Aspergillus clavatus (strain ATCC 1007 / CBS 513.65 / DSM 816 / NCTC 3887 / NRRL 1 / QM 1276 / 107)</name>
    <dbReference type="NCBI Taxonomy" id="344612"/>
    <lineage>
        <taxon>Eukaryota</taxon>
        <taxon>Fungi</taxon>
        <taxon>Dikarya</taxon>
        <taxon>Ascomycota</taxon>
        <taxon>Pezizomycotina</taxon>
        <taxon>Eurotiomycetes</taxon>
        <taxon>Eurotiomycetidae</taxon>
        <taxon>Eurotiales</taxon>
        <taxon>Aspergillaceae</taxon>
        <taxon>Aspergillus</taxon>
        <taxon>Aspergillus subgen. Fumigati</taxon>
    </lineage>
</organism>
<proteinExistence type="inferred from homology"/>
<gene>
    <name type="primary">bna5-2</name>
    <name type="ORF">ACLA_049070</name>
</gene>
<evidence type="ECO:0000255" key="1">
    <source>
        <dbReference type="HAMAP-Rule" id="MF_03017"/>
    </source>
</evidence>
<feature type="chain" id="PRO_0000356962" description="Kynureninase 2">
    <location>
        <begin position="1"/>
        <end position="464"/>
    </location>
</feature>
<feature type="binding site" evidence="1">
    <location>
        <position position="135"/>
    </location>
    <ligand>
        <name>pyridoxal 5'-phosphate</name>
        <dbReference type="ChEBI" id="CHEBI:597326"/>
    </ligand>
</feature>
<feature type="binding site" evidence="1">
    <location>
        <position position="136"/>
    </location>
    <ligand>
        <name>pyridoxal 5'-phosphate</name>
        <dbReference type="ChEBI" id="CHEBI:597326"/>
    </ligand>
</feature>
<feature type="binding site" evidence="1">
    <location>
        <begin position="163"/>
        <end position="166"/>
    </location>
    <ligand>
        <name>pyridoxal 5'-phosphate</name>
        <dbReference type="ChEBI" id="CHEBI:597326"/>
    </ligand>
</feature>
<feature type="binding site" evidence="1">
    <location>
        <position position="248"/>
    </location>
    <ligand>
        <name>pyridoxal 5'-phosphate</name>
        <dbReference type="ChEBI" id="CHEBI:597326"/>
    </ligand>
</feature>
<feature type="binding site" evidence="1">
    <location>
        <position position="251"/>
    </location>
    <ligand>
        <name>pyridoxal 5'-phosphate</name>
        <dbReference type="ChEBI" id="CHEBI:597326"/>
    </ligand>
</feature>
<feature type="binding site" evidence="1">
    <location>
        <position position="273"/>
    </location>
    <ligand>
        <name>pyridoxal 5'-phosphate</name>
        <dbReference type="ChEBI" id="CHEBI:597326"/>
    </ligand>
</feature>
<feature type="binding site" evidence="1">
    <location>
        <position position="313"/>
    </location>
    <ligand>
        <name>pyridoxal 5'-phosphate</name>
        <dbReference type="ChEBI" id="CHEBI:597326"/>
    </ligand>
</feature>
<feature type="binding site" evidence="1">
    <location>
        <position position="341"/>
    </location>
    <ligand>
        <name>pyridoxal 5'-phosphate</name>
        <dbReference type="ChEBI" id="CHEBI:597326"/>
    </ligand>
</feature>
<feature type="modified residue" description="N6-(pyridoxal phosphate)lysine" evidence="1">
    <location>
        <position position="274"/>
    </location>
</feature>
<name>KYNU2_ASPCL</name>
<comment type="function">
    <text evidence="1">Catalyzes the cleavage of L-kynurenine (L-Kyn) and L-3-hydroxykynurenine (L-3OHKyn) into anthranilic acid (AA) and 3-hydroxyanthranilic acid (3-OHAA), respectively.</text>
</comment>
<comment type="catalytic activity">
    <reaction evidence="1">
        <text>L-kynurenine + H2O = anthranilate + L-alanine + H(+)</text>
        <dbReference type="Rhea" id="RHEA:16813"/>
        <dbReference type="ChEBI" id="CHEBI:15377"/>
        <dbReference type="ChEBI" id="CHEBI:15378"/>
        <dbReference type="ChEBI" id="CHEBI:16567"/>
        <dbReference type="ChEBI" id="CHEBI:57959"/>
        <dbReference type="ChEBI" id="CHEBI:57972"/>
        <dbReference type="EC" id="3.7.1.3"/>
    </reaction>
</comment>
<comment type="catalytic activity">
    <reaction evidence="1">
        <text>3-hydroxy-L-kynurenine + H2O = 3-hydroxyanthranilate + L-alanine + H(+)</text>
        <dbReference type="Rhea" id="RHEA:25143"/>
        <dbReference type="ChEBI" id="CHEBI:15377"/>
        <dbReference type="ChEBI" id="CHEBI:15378"/>
        <dbReference type="ChEBI" id="CHEBI:36559"/>
        <dbReference type="ChEBI" id="CHEBI:57972"/>
        <dbReference type="ChEBI" id="CHEBI:58125"/>
        <dbReference type="EC" id="3.7.1.3"/>
    </reaction>
</comment>
<comment type="cofactor">
    <cofactor evidence="1">
        <name>pyridoxal 5'-phosphate</name>
        <dbReference type="ChEBI" id="CHEBI:597326"/>
    </cofactor>
</comment>
<comment type="pathway">
    <text evidence="1">Amino-acid degradation; L-kynurenine degradation; L-alanine and anthranilate from L-kynurenine: step 1/1.</text>
</comment>
<comment type="pathway">
    <text evidence="1">Cofactor biosynthesis; NAD(+) biosynthesis; quinolinate from L-kynurenine: step 2/3.</text>
</comment>
<comment type="subunit">
    <text evidence="1">Homodimer.</text>
</comment>
<comment type="subcellular location">
    <subcellularLocation>
        <location evidence="1">Cytoplasm</location>
    </subcellularLocation>
</comment>
<comment type="similarity">
    <text evidence="1">Belongs to the kynureninase family.</text>
</comment>
<keyword id="KW-0963">Cytoplasm</keyword>
<keyword id="KW-0378">Hydrolase</keyword>
<keyword id="KW-0662">Pyridine nucleotide biosynthesis</keyword>
<keyword id="KW-0663">Pyridoxal phosphate</keyword>
<keyword id="KW-1185">Reference proteome</keyword>
<accession>A1CHT0</accession>
<protein>
    <recommendedName>
        <fullName evidence="1">Kynureninase 2</fullName>
        <ecNumber evidence="1">3.7.1.3</ecNumber>
    </recommendedName>
    <alternativeName>
        <fullName evidence="1">Biosynthesis of nicotinic acid protein 5-2</fullName>
    </alternativeName>
    <alternativeName>
        <fullName evidence="1">L-kynurenine hydrolase 2</fullName>
    </alternativeName>
</protein>
<dbReference type="EC" id="3.7.1.3" evidence="1"/>
<dbReference type="EMBL" id="DS027054">
    <property type="protein sequence ID" value="EAW10435.1"/>
    <property type="molecule type" value="Genomic_DNA"/>
</dbReference>
<dbReference type="RefSeq" id="XP_001271861.1">
    <property type="nucleotide sequence ID" value="XM_001271860.1"/>
</dbReference>
<dbReference type="SMR" id="A1CHT0"/>
<dbReference type="STRING" id="344612.A1CHT0"/>
<dbReference type="EnsemblFungi" id="EAW10435">
    <property type="protein sequence ID" value="EAW10435"/>
    <property type="gene ID" value="ACLA_049070"/>
</dbReference>
<dbReference type="GeneID" id="4704039"/>
<dbReference type="KEGG" id="act:ACLA_049070"/>
<dbReference type="VEuPathDB" id="FungiDB:ACLA_049070"/>
<dbReference type="eggNOG" id="KOG3846">
    <property type="taxonomic scope" value="Eukaryota"/>
</dbReference>
<dbReference type="HOGENOM" id="CLU_003433_4_0_1"/>
<dbReference type="OMA" id="SHVAYRS"/>
<dbReference type="OrthoDB" id="5978656at2759"/>
<dbReference type="UniPathway" id="UPA00253">
    <property type="reaction ID" value="UER00329"/>
</dbReference>
<dbReference type="UniPathway" id="UPA00334">
    <property type="reaction ID" value="UER00455"/>
</dbReference>
<dbReference type="Proteomes" id="UP000006701">
    <property type="component" value="Unassembled WGS sequence"/>
</dbReference>
<dbReference type="GO" id="GO:0005737">
    <property type="term" value="C:cytoplasm"/>
    <property type="evidence" value="ECO:0007669"/>
    <property type="project" value="UniProtKB-SubCell"/>
</dbReference>
<dbReference type="GO" id="GO:0030429">
    <property type="term" value="F:kynureninase activity"/>
    <property type="evidence" value="ECO:0007669"/>
    <property type="project" value="UniProtKB-UniRule"/>
</dbReference>
<dbReference type="GO" id="GO:0030170">
    <property type="term" value="F:pyridoxal phosphate binding"/>
    <property type="evidence" value="ECO:0007669"/>
    <property type="project" value="UniProtKB-UniRule"/>
</dbReference>
<dbReference type="GO" id="GO:0034354">
    <property type="term" value="P:'de novo' NAD biosynthetic process from L-tryptophan"/>
    <property type="evidence" value="ECO:0007669"/>
    <property type="project" value="UniProtKB-UniRule"/>
</dbReference>
<dbReference type="GO" id="GO:0043420">
    <property type="term" value="P:anthranilate metabolic process"/>
    <property type="evidence" value="ECO:0007669"/>
    <property type="project" value="UniProtKB-UniRule"/>
</dbReference>
<dbReference type="GO" id="GO:0097053">
    <property type="term" value="P:L-kynurenine catabolic process"/>
    <property type="evidence" value="ECO:0007669"/>
    <property type="project" value="UniProtKB-UniRule"/>
</dbReference>
<dbReference type="GO" id="GO:0019441">
    <property type="term" value="P:L-tryptophan catabolic process to kynurenine"/>
    <property type="evidence" value="ECO:0007669"/>
    <property type="project" value="TreeGrafter"/>
</dbReference>
<dbReference type="GO" id="GO:0019805">
    <property type="term" value="P:quinolinate biosynthetic process"/>
    <property type="evidence" value="ECO:0007669"/>
    <property type="project" value="UniProtKB-UniRule"/>
</dbReference>
<dbReference type="FunFam" id="3.40.640.10:FF:000031">
    <property type="entry name" value="Kynureninase"/>
    <property type="match status" value="1"/>
</dbReference>
<dbReference type="Gene3D" id="3.90.1150.10">
    <property type="entry name" value="Aspartate Aminotransferase, domain 1"/>
    <property type="match status" value="1"/>
</dbReference>
<dbReference type="Gene3D" id="3.40.640.10">
    <property type="entry name" value="Type I PLP-dependent aspartate aminotransferase-like (Major domain)"/>
    <property type="match status" value="1"/>
</dbReference>
<dbReference type="HAMAP" id="MF_01970">
    <property type="entry name" value="Kynureninase"/>
    <property type="match status" value="1"/>
</dbReference>
<dbReference type="InterPro" id="IPR000192">
    <property type="entry name" value="Aminotrans_V_dom"/>
</dbReference>
<dbReference type="InterPro" id="IPR010111">
    <property type="entry name" value="Kynureninase"/>
</dbReference>
<dbReference type="InterPro" id="IPR015424">
    <property type="entry name" value="PyrdxlP-dep_Trfase"/>
</dbReference>
<dbReference type="InterPro" id="IPR015421">
    <property type="entry name" value="PyrdxlP-dep_Trfase_major"/>
</dbReference>
<dbReference type="InterPro" id="IPR015422">
    <property type="entry name" value="PyrdxlP-dep_Trfase_small"/>
</dbReference>
<dbReference type="NCBIfam" id="TIGR01814">
    <property type="entry name" value="kynureninase"/>
    <property type="match status" value="1"/>
</dbReference>
<dbReference type="PANTHER" id="PTHR14084">
    <property type="entry name" value="KYNURENINASE"/>
    <property type="match status" value="1"/>
</dbReference>
<dbReference type="PANTHER" id="PTHR14084:SF2">
    <property type="entry name" value="KYNURENINASE 2"/>
    <property type="match status" value="1"/>
</dbReference>
<dbReference type="Pfam" id="PF00266">
    <property type="entry name" value="Aminotran_5"/>
    <property type="match status" value="1"/>
</dbReference>
<dbReference type="Pfam" id="PF22580">
    <property type="entry name" value="KYNU_C"/>
    <property type="match status" value="1"/>
</dbReference>
<dbReference type="PIRSF" id="PIRSF038800">
    <property type="entry name" value="KYNU"/>
    <property type="match status" value="1"/>
</dbReference>
<dbReference type="SUPFAM" id="SSF53383">
    <property type="entry name" value="PLP-dependent transferases"/>
    <property type="match status" value="1"/>
</dbReference>
<sequence>MSTTTTSSKPEFPADAATKEYAASLDASDPLAGFREKFIIPSKANIASKKLAKPGLSSEPCIYFCGNSLGIQPKATAKYLEAQLDTWSSIGVSGHFTNVEDSPLREWQNLAEQAAESMSRVVGAAPEEVAAMGTLTMNLHLLLASFYRPTATKHKILMDWKAFPSDHYAIESHIAWHDLDPKESMVLIGPDEGTFEIPTEKILSYIDQHADDAALILLPGIQYYTGQLFDIQKITEYAQSRGLVVGWDLAHAYGNVHLKLHDWNVDFAAWCTYKYGNAGPGAMAGLFVHERHGRVDYREGEDSPKFRHRLTGWYGGDKSVRFKMDNNFKPIPGAGGYQISNPSAIDLASLCAALSVFDETSMAELRRKSVLMTAYLEHLLLKDTTDESRLFDIITPSEPAARGAQLSLLLRPGLLHKVAQRLQEAGIICDKREPGVVRVAPVPLYNTFTEVWTFVEQLKAALEE</sequence>
<reference key="1">
    <citation type="journal article" date="2008" name="PLoS Genet.">
        <title>Genomic islands in the pathogenic filamentous fungus Aspergillus fumigatus.</title>
        <authorList>
            <person name="Fedorova N.D."/>
            <person name="Khaldi N."/>
            <person name="Joardar V.S."/>
            <person name="Maiti R."/>
            <person name="Amedeo P."/>
            <person name="Anderson M.J."/>
            <person name="Crabtree J."/>
            <person name="Silva J.C."/>
            <person name="Badger J.H."/>
            <person name="Albarraq A."/>
            <person name="Angiuoli S."/>
            <person name="Bussey H."/>
            <person name="Bowyer P."/>
            <person name="Cotty P.J."/>
            <person name="Dyer P.S."/>
            <person name="Egan A."/>
            <person name="Galens K."/>
            <person name="Fraser-Liggett C.M."/>
            <person name="Haas B.J."/>
            <person name="Inman J.M."/>
            <person name="Kent R."/>
            <person name="Lemieux S."/>
            <person name="Malavazi I."/>
            <person name="Orvis J."/>
            <person name="Roemer T."/>
            <person name="Ronning C.M."/>
            <person name="Sundaram J.P."/>
            <person name="Sutton G."/>
            <person name="Turner G."/>
            <person name="Venter J.C."/>
            <person name="White O.R."/>
            <person name="Whitty B.R."/>
            <person name="Youngman P."/>
            <person name="Wolfe K.H."/>
            <person name="Goldman G.H."/>
            <person name="Wortman J.R."/>
            <person name="Jiang B."/>
            <person name="Denning D.W."/>
            <person name="Nierman W.C."/>
        </authorList>
    </citation>
    <scope>NUCLEOTIDE SEQUENCE [LARGE SCALE GENOMIC DNA]</scope>
    <source>
        <strain>ATCC 1007 / CBS 513.65 / DSM 816 / NCTC 3887 / NRRL 1 / QM 1276 / 107</strain>
    </source>
</reference>